<proteinExistence type="inferred from homology"/>
<gene>
    <name evidence="1" type="primary">rimO</name>
    <name type="ordered locus">tlr1564</name>
</gene>
<accession>Q8DIL8</accession>
<comment type="function">
    <text evidence="1">Catalyzes the methylthiolation of an aspartic acid residue of ribosomal protein uS12.</text>
</comment>
<comment type="catalytic activity">
    <reaction evidence="1">
        <text>L-aspartate(89)-[ribosomal protein uS12]-hydrogen + (sulfur carrier)-SH + AH2 + 2 S-adenosyl-L-methionine = 3-methylsulfanyl-L-aspartate(89)-[ribosomal protein uS12]-hydrogen + (sulfur carrier)-H + 5'-deoxyadenosine + L-methionine + A + S-adenosyl-L-homocysteine + 2 H(+)</text>
        <dbReference type="Rhea" id="RHEA:37087"/>
        <dbReference type="Rhea" id="RHEA-COMP:10460"/>
        <dbReference type="Rhea" id="RHEA-COMP:10461"/>
        <dbReference type="Rhea" id="RHEA-COMP:14737"/>
        <dbReference type="Rhea" id="RHEA-COMP:14739"/>
        <dbReference type="ChEBI" id="CHEBI:13193"/>
        <dbReference type="ChEBI" id="CHEBI:15378"/>
        <dbReference type="ChEBI" id="CHEBI:17319"/>
        <dbReference type="ChEBI" id="CHEBI:17499"/>
        <dbReference type="ChEBI" id="CHEBI:29917"/>
        <dbReference type="ChEBI" id="CHEBI:29961"/>
        <dbReference type="ChEBI" id="CHEBI:57844"/>
        <dbReference type="ChEBI" id="CHEBI:57856"/>
        <dbReference type="ChEBI" id="CHEBI:59789"/>
        <dbReference type="ChEBI" id="CHEBI:64428"/>
        <dbReference type="ChEBI" id="CHEBI:73599"/>
        <dbReference type="EC" id="2.8.4.4"/>
    </reaction>
</comment>
<comment type="cofactor">
    <cofactor evidence="1">
        <name>[4Fe-4S] cluster</name>
        <dbReference type="ChEBI" id="CHEBI:49883"/>
    </cofactor>
    <text evidence="1">Binds 2 [4Fe-4S] clusters. One cluster is coordinated with 3 cysteines and an exchangeable S-adenosyl-L-methionine.</text>
</comment>
<comment type="subcellular location">
    <subcellularLocation>
        <location evidence="1">Cytoplasm</location>
    </subcellularLocation>
</comment>
<comment type="similarity">
    <text evidence="1">Belongs to the methylthiotransferase family. RimO subfamily.</text>
</comment>
<sequence>MPNPKKPKIAFAHLGCDKNRVDTEHMIGLLAAAGYGVGTDETEADYVIVNTCSFIQAAREESVRTLVELAEANKKIVITGCLAQHFQGELLAELPEAVAVVGSGDYQHIVEVIERVERGERVQQISAVPTYIADETVPRYRTTPAPVAYLRIAEGCDYRCAFCIIPHLRGNQRSRSLESIVSEAHQLAAEGVQEIIIVSQITTNYGLDRYGQPQLATLIRALGEVDVPWIRLHYAYPTGLTPEVIAAMRETPNILPYLDLPLQHSHPEVLRAMNRPWQAGVNDRLIERLRQELPEAVVRTTFIVGFPGETESQFEHLCQFVQRHEFDHVGVFTYSPEEGTAAYDLPHQIPEEIKRARRDRLMELQQPIAQRKNAAEVGKIVPVLIEQENPQTGEFIGRSPRFAPEVDGVVYVKGAATLGTIVPVEITAADIYDLYGIIPASVRFYP</sequence>
<organism>
    <name type="scientific">Thermosynechococcus vestitus (strain NIES-2133 / IAM M-273 / BP-1)</name>
    <dbReference type="NCBI Taxonomy" id="197221"/>
    <lineage>
        <taxon>Bacteria</taxon>
        <taxon>Bacillati</taxon>
        <taxon>Cyanobacteriota</taxon>
        <taxon>Cyanophyceae</taxon>
        <taxon>Acaryochloridales</taxon>
        <taxon>Thermosynechococcaceae</taxon>
        <taxon>Thermosynechococcus</taxon>
    </lineage>
</organism>
<keyword id="KW-0004">4Fe-4S</keyword>
<keyword id="KW-0963">Cytoplasm</keyword>
<keyword id="KW-0408">Iron</keyword>
<keyword id="KW-0411">Iron-sulfur</keyword>
<keyword id="KW-0479">Metal-binding</keyword>
<keyword id="KW-1185">Reference proteome</keyword>
<keyword id="KW-0949">S-adenosyl-L-methionine</keyword>
<keyword id="KW-0808">Transferase</keyword>
<feature type="chain" id="PRO_0000375050" description="Ribosomal protein uS12 methylthiotransferase RimO">
    <location>
        <begin position="1"/>
        <end position="446"/>
    </location>
</feature>
<feature type="domain" description="MTTase N-terminal" evidence="1">
    <location>
        <begin position="7"/>
        <end position="118"/>
    </location>
</feature>
<feature type="domain" description="Radical SAM core" evidence="2">
    <location>
        <begin position="142"/>
        <end position="371"/>
    </location>
</feature>
<feature type="domain" description="TRAM" evidence="1">
    <location>
        <begin position="374"/>
        <end position="440"/>
    </location>
</feature>
<feature type="binding site" evidence="1">
    <location>
        <position position="16"/>
    </location>
    <ligand>
        <name>[4Fe-4S] cluster</name>
        <dbReference type="ChEBI" id="CHEBI:49883"/>
        <label>1</label>
    </ligand>
</feature>
<feature type="binding site" evidence="1">
    <location>
        <position position="52"/>
    </location>
    <ligand>
        <name>[4Fe-4S] cluster</name>
        <dbReference type="ChEBI" id="CHEBI:49883"/>
        <label>1</label>
    </ligand>
</feature>
<feature type="binding site" evidence="1">
    <location>
        <position position="81"/>
    </location>
    <ligand>
        <name>[4Fe-4S] cluster</name>
        <dbReference type="ChEBI" id="CHEBI:49883"/>
        <label>1</label>
    </ligand>
</feature>
<feature type="binding site" evidence="1">
    <location>
        <position position="156"/>
    </location>
    <ligand>
        <name>[4Fe-4S] cluster</name>
        <dbReference type="ChEBI" id="CHEBI:49883"/>
        <label>2</label>
        <note>4Fe-4S-S-AdoMet</note>
    </ligand>
</feature>
<feature type="binding site" evidence="1">
    <location>
        <position position="160"/>
    </location>
    <ligand>
        <name>[4Fe-4S] cluster</name>
        <dbReference type="ChEBI" id="CHEBI:49883"/>
        <label>2</label>
        <note>4Fe-4S-S-AdoMet</note>
    </ligand>
</feature>
<feature type="binding site" evidence="1">
    <location>
        <position position="163"/>
    </location>
    <ligand>
        <name>[4Fe-4S] cluster</name>
        <dbReference type="ChEBI" id="CHEBI:49883"/>
        <label>2</label>
        <note>4Fe-4S-S-AdoMet</note>
    </ligand>
</feature>
<reference key="1">
    <citation type="journal article" date="2002" name="DNA Res.">
        <title>Complete genome structure of the thermophilic cyanobacterium Thermosynechococcus elongatus BP-1.</title>
        <authorList>
            <person name="Nakamura Y."/>
            <person name="Kaneko T."/>
            <person name="Sato S."/>
            <person name="Ikeuchi M."/>
            <person name="Katoh H."/>
            <person name="Sasamoto S."/>
            <person name="Watanabe A."/>
            <person name="Iriguchi M."/>
            <person name="Kawashima K."/>
            <person name="Kimura T."/>
            <person name="Kishida Y."/>
            <person name="Kiyokawa C."/>
            <person name="Kohara M."/>
            <person name="Matsumoto M."/>
            <person name="Matsuno A."/>
            <person name="Nakazaki N."/>
            <person name="Shimpo S."/>
            <person name="Sugimoto M."/>
            <person name="Takeuchi C."/>
            <person name="Yamada M."/>
            <person name="Tabata S."/>
        </authorList>
    </citation>
    <scope>NUCLEOTIDE SEQUENCE [LARGE SCALE GENOMIC DNA]</scope>
    <source>
        <strain>NIES-2133 / IAM M-273 / BP-1</strain>
    </source>
</reference>
<name>RIMO_THEVB</name>
<dbReference type="EC" id="2.8.4.4" evidence="1"/>
<dbReference type="EMBL" id="BA000039">
    <property type="protein sequence ID" value="BAC09116.1"/>
    <property type="molecule type" value="Genomic_DNA"/>
</dbReference>
<dbReference type="RefSeq" id="NP_682354.1">
    <property type="nucleotide sequence ID" value="NC_004113.1"/>
</dbReference>
<dbReference type="RefSeq" id="WP_011057404.1">
    <property type="nucleotide sequence ID" value="NC_004113.1"/>
</dbReference>
<dbReference type="SMR" id="Q8DIL8"/>
<dbReference type="STRING" id="197221.gene:10748166"/>
<dbReference type="EnsemblBacteria" id="BAC09116">
    <property type="protein sequence ID" value="BAC09116"/>
    <property type="gene ID" value="BAC09116"/>
</dbReference>
<dbReference type="KEGG" id="tel:tlr1564"/>
<dbReference type="PATRIC" id="fig|197221.4.peg.1640"/>
<dbReference type="eggNOG" id="COG0621">
    <property type="taxonomic scope" value="Bacteria"/>
</dbReference>
<dbReference type="Proteomes" id="UP000000440">
    <property type="component" value="Chromosome"/>
</dbReference>
<dbReference type="GO" id="GO:0005829">
    <property type="term" value="C:cytosol"/>
    <property type="evidence" value="ECO:0007669"/>
    <property type="project" value="TreeGrafter"/>
</dbReference>
<dbReference type="GO" id="GO:0051539">
    <property type="term" value="F:4 iron, 4 sulfur cluster binding"/>
    <property type="evidence" value="ECO:0007669"/>
    <property type="project" value="UniProtKB-UniRule"/>
</dbReference>
<dbReference type="GO" id="GO:0035599">
    <property type="term" value="F:aspartic acid methylthiotransferase activity"/>
    <property type="evidence" value="ECO:0007669"/>
    <property type="project" value="TreeGrafter"/>
</dbReference>
<dbReference type="GO" id="GO:0046872">
    <property type="term" value="F:metal ion binding"/>
    <property type="evidence" value="ECO:0007669"/>
    <property type="project" value="UniProtKB-KW"/>
</dbReference>
<dbReference type="GO" id="GO:0103039">
    <property type="term" value="F:protein methylthiotransferase activity"/>
    <property type="evidence" value="ECO:0007669"/>
    <property type="project" value="UniProtKB-EC"/>
</dbReference>
<dbReference type="GO" id="GO:0006400">
    <property type="term" value="P:tRNA modification"/>
    <property type="evidence" value="ECO:0007669"/>
    <property type="project" value="InterPro"/>
</dbReference>
<dbReference type="CDD" id="cd01335">
    <property type="entry name" value="Radical_SAM"/>
    <property type="match status" value="1"/>
</dbReference>
<dbReference type="FunFam" id="3.40.50.12160:FF:000002">
    <property type="entry name" value="Ribosomal protein S12 methylthiotransferase RimO"/>
    <property type="match status" value="1"/>
</dbReference>
<dbReference type="FunFam" id="3.80.30.20:FF:000001">
    <property type="entry name" value="tRNA-2-methylthio-N(6)-dimethylallyladenosine synthase 2"/>
    <property type="match status" value="1"/>
</dbReference>
<dbReference type="Gene3D" id="3.40.50.12160">
    <property type="entry name" value="Methylthiotransferase, N-terminal domain"/>
    <property type="match status" value="1"/>
</dbReference>
<dbReference type="Gene3D" id="2.40.50.140">
    <property type="entry name" value="Nucleic acid-binding proteins"/>
    <property type="match status" value="1"/>
</dbReference>
<dbReference type="Gene3D" id="3.80.30.20">
    <property type="entry name" value="tm_1862 like domain"/>
    <property type="match status" value="1"/>
</dbReference>
<dbReference type="HAMAP" id="MF_01865">
    <property type="entry name" value="MTTase_RimO"/>
    <property type="match status" value="1"/>
</dbReference>
<dbReference type="InterPro" id="IPR006638">
    <property type="entry name" value="Elp3/MiaA/NifB-like_rSAM"/>
</dbReference>
<dbReference type="InterPro" id="IPR005839">
    <property type="entry name" value="Methylthiotransferase"/>
</dbReference>
<dbReference type="InterPro" id="IPR020612">
    <property type="entry name" value="Methylthiotransferase_CS"/>
</dbReference>
<dbReference type="InterPro" id="IPR013848">
    <property type="entry name" value="Methylthiotransferase_N"/>
</dbReference>
<dbReference type="InterPro" id="IPR038135">
    <property type="entry name" value="Methylthiotransferase_N_sf"/>
</dbReference>
<dbReference type="InterPro" id="IPR012340">
    <property type="entry name" value="NA-bd_OB-fold"/>
</dbReference>
<dbReference type="InterPro" id="IPR005840">
    <property type="entry name" value="Ribosomal_uS12_MeSTrfase_RimO"/>
</dbReference>
<dbReference type="InterPro" id="IPR007197">
    <property type="entry name" value="rSAM"/>
</dbReference>
<dbReference type="InterPro" id="IPR023404">
    <property type="entry name" value="rSAM_horseshoe"/>
</dbReference>
<dbReference type="InterPro" id="IPR002792">
    <property type="entry name" value="TRAM_dom"/>
</dbReference>
<dbReference type="NCBIfam" id="TIGR01125">
    <property type="entry name" value="30S ribosomal protein S12 methylthiotransferase RimO"/>
    <property type="match status" value="1"/>
</dbReference>
<dbReference type="NCBIfam" id="TIGR00089">
    <property type="entry name" value="MiaB/RimO family radical SAM methylthiotransferase"/>
    <property type="match status" value="1"/>
</dbReference>
<dbReference type="PANTHER" id="PTHR43837">
    <property type="entry name" value="RIBOSOMAL PROTEIN S12 METHYLTHIOTRANSFERASE RIMO"/>
    <property type="match status" value="1"/>
</dbReference>
<dbReference type="PANTHER" id="PTHR43837:SF1">
    <property type="entry name" value="RIBOSOMAL PROTEIN US12 METHYLTHIOTRANSFERASE RIMO"/>
    <property type="match status" value="1"/>
</dbReference>
<dbReference type="Pfam" id="PF04055">
    <property type="entry name" value="Radical_SAM"/>
    <property type="match status" value="1"/>
</dbReference>
<dbReference type="Pfam" id="PF18693">
    <property type="entry name" value="TRAM_2"/>
    <property type="match status" value="1"/>
</dbReference>
<dbReference type="Pfam" id="PF00919">
    <property type="entry name" value="UPF0004"/>
    <property type="match status" value="1"/>
</dbReference>
<dbReference type="SFLD" id="SFLDG01082">
    <property type="entry name" value="B12-binding_domain_containing"/>
    <property type="match status" value="1"/>
</dbReference>
<dbReference type="SFLD" id="SFLDG01061">
    <property type="entry name" value="methylthiotransferase"/>
    <property type="match status" value="1"/>
</dbReference>
<dbReference type="SFLD" id="SFLDF00274">
    <property type="entry name" value="ribosomal_protein_S12_methylth"/>
    <property type="match status" value="1"/>
</dbReference>
<dbReference type="SMART" id="SM00729">
    <property type="entry name" value="Elp3"/>
    <property type="match status" value="1"/>
</dbReference>
<dbReference type="SUPFAM" id="SSF102114">
    <property type="entry name" value="Radical SAM enzymes"/>
    <property type="match status" value="1"/>
</dbReference>
<dbReference type="PROSITE" id="PS51449">
    <property type="entry name" value="MTTASE_N"/>
    <property type="match status" value="1"/>
</dbReference>
<dbReference type="PROSITE" id="PS01278">
    <property type="entry name" value="MTTASE_RADICAL"/>
    <property type="match status" value="1"/>
</dbReference>
<dbReference type="PROSITE" id="PS51918">
    <property type="entry name" value="RADICAL_SAM"/>
    <property type="match status" value="1"/>
</dbReference>
<dbReference type="PROSITE" id="PS50926">
    <property type="entry name" value="TRAM"/>
    <property type="match status" value="1"/>
</dbReference>
<evidence type="ECO:0000255" key="1">
    <source>
        <dbReference type="HAMAP-Rule" id="MF_01865"/>
    </source>
</evidence>
<evidence type="ECO:0000255" key="2">
    <source>
        <dbReference type="PROSITE-ProRule" id="PRU01266"/>
    </source>
</evidence>
<protein>
    <recommendedName>
        <fullName evidence="1">Ribosomal protein uS12 methylthiotransferase RimO</fullName>
        <shortName evidence="1">uS12 MTTase</shortName>
        <shortName evidence="1">uS12 methylthiotransferase</shortName>
        <ecNumber evidence="1">2.8.4.4</ecNumber>
    </recommendedName>
    <alternativeName>
        <fullName evidence="1">Ribosomal protein uS12 (aspartate-C(3))-methylthiotransferase</fullName>
    </alternativeName>
    <alternativeName>
        <fullName evidence="1">Ribosome maturation factor RimO</fullName>
    </alternativeName>
</protein>